<comment type="function">
    <molecule>Isoform 1</molecule>
    <text evidence="7 9">Ca(2+)-binding protein that plays a key role in store-operated Ca(2+) entry (SOCE) in T-cells by regulating CRAC channel activation. Acts as a cytoplasmic calcium-sensor that facilitates the clustering of ORAI1 and STIM1 at the junctional regions between the plasma membrane and the endoplasmic reticulum upon low Ca(2+) concentration. It thereby regulates CRAC channel activation, including translocation and clustering of ORAI1 and STIM1. Upon increase of cytoplasmic Ca(2+) resulting from opening of CRAC channels, dissociates from ORAI1 and STIM1, thereby destabilizing the ORAI1-STIM1 complex.</text>
</comment>
<comment type="function">
    <molecule>Isoform 2</molecule>
    <text evidence="9 10 11 12">Rab GTPase that mediates the trafficking of Weibel-Palade bodies (WPBs) to microtubule organizing center (MTOC) in endothelial cells in response to acute inflammatory stimuli (PubMed:31092558). During histamine (but not thrombin) stimulation of endothelial cells, the dynein-bound form induces retrograde transport of a subset of WPBs along microtubules to the MTOC in a Ca(2+)-independent manner and its GTPase activity is essential for this function (PubMed:31092558). Ca(2+)-regulated dynein adapter protein that activates dynein-mediated transport and dynein-dynactin motility on microtubules and regulates endosomal trafficking of CD47 (PubMed:30814157). Acts as an intracellular signaling module bridging two important T-cell receptor (TCR) signaling pathways, Ca(2+)-NFAT and JNK, to affect T-cell activation (PubMed:27016526). In resting T-cells, is predominantly localized near TGN network in a GTP-bound form, upon TCR stimulation, localizes at the immunological synapse via interaction with VAV1 to activate downstream Ca(2+)-NFAT and JNK signaling pathways (PubMed:27016526). Plays a role in T-helper 1 (Th1) cell differentiation and T-helper 17 (Th17) cell effector function (PubMed:29987160). Plays a role in store-operated Ca(2+) entry (SOCE) in T-cells by regulating CRAC channel activation (PubMed:27016526).</text>
</comment>
<comment type="catalytic activity">
    <molecule>Isoform 2</molecule>
    <reaction evidence="9">
        <text>GTP + H2O = GDP + phosphate + H(+)</text>
        <dbReference type="Rhea" id="RHEA:19669"/>
        <dbReference type="ChEBI" id="CHEBI:15377"/>
        <dbReference type="ChEBI" id="CHEBI:15378"/>
        <dbReference type="ChEBI" id="CHEBI:37565"/>
        <dbReference type="ChEBI" id="CHEBI:43474"/>
        <dbReference type="ChEBI" id="CHEBI:58189"/>
        <dbReference type="EC" id="3.6.5.2"/>
    </reaction>
    <physiologicalReaction direction="left-to-right" evidence="17">
        <dbReference type="Rhea" id="RHEA:19670"/>
    </physiologicalReaction>
</comment>
<comment type="cofactor">
    <cofactor evidence="1">
        <name>Mg(2+)</name>
        <dbReference type="ChEBI" id="CHEBI:18420"/>
    </cofactor>
</comment>
<comment type="subunit">
    <molecule>Isoform 1</molecule>
    <text evidence="7">Interacts with ORAI1 and STIM1; the interaction is direct and takes place in absence of Ca(2+). Forms a complex with ORAI1 and STIM1 at low concentration of Ca(2+), the complex dissociates at elevated Ca(2+) concentrations. Interacts with ORAI2 and ORAI3.</text>
</comment>
<comment type="subunit">
    <molecule>Isoform 2</molecule>
    <text evidence="9 11 12">Interacts with DYNC1H1 (PubMed:31092558). Interacts with the dynein-dynactin complex in a Ca(2+)-dependent manner (PubMed:30814157). Interacts with VAV1 (PubMed:27016526).</text>
</comment>
<comment type="interaction">
    <interactant intactId="EBI-739773">
        <id>Q9BSW2</id>
    </interactant>
    <interactant intactId="EBI-17439331">
        <id>Q8N6D5</id>
        <label>ANKRD29</label>
    </interactant>
    <organismsDiffer>false</organismsDiffer>
    <experiments>3</experiments>
</comment>
<comment type="interaction">
    <interactant intactId="EBI-739773">
        <id>Q9BSW2</id>
    </interactant>
    <interactant intactId="EBI-14199987">
        <id>Q9Y575-3</id>
        <label>ASB3</label>
    </interactant>
    <organismsDiffer>false</organismsDiffer>
    <experiments>3</experiments>
</comment>
<comment type="interaction">
    <interactant intactId="EBI-739773">
        <id>Q9BSW2</id>
    </interactant>
    <interactant intactId="EBI-10175300">
        <id>Q8TD31-3</id>
        <label>CCHCR1</label>
    </interactant>
    <organismsDiffer>false</organismsDiffer>
    <experiments>3</experiments>
</comment>
<comment type="interaction">
    <interactant intactId="EBI-739773">
        <id>Q9BSW2</id>
    </interactant>
    <interactant intactId="EBI-396137">
        <id>Q9UJX2</id>
        <label>CDC23</label>
    </interactant>
    <organismsDiffer>false</organismsDiffer>
    <experiments>3</experiments>
</comment>
<comment type="interaction">
    <interactant intactId="EBI-739773">
        <id>Q9BSW2</id>
    </interactant>
    <interactant intactId="EBI-739780">
        <id>Q96AJ1</id>
        <label>CLUAP1</label>
    </interactant>
    <organismsDiffer>false</organismsDiffer>
    <experiments>2</experiments>
</comment>
<comment type="interaction">
    <interactant intactId="EBI-739773">
        <id>Q9BSW2</id>
    </interactant>
    <interactant intactId="EBI-742651">
        <id>P35638</id>
        <label>DDIT3</label>
    </interactant>
    <organismsDiffer>false</organismsDiffer>
    <experiments>3</experiments>
</comment>
<comment type="interaction">
    <interactant intactId="EBI-739773">
        <id>Q9BSW2</id>
    </interactant>
    <interactant intactId="EBI-10976677">
        <id>G5E9A7</id>
        <label>DMWD</label>
    </interactant>
    <organismsDiffer>false</organismsDiffer>
    <experiments>3</experiments>
</comment>
<comment type="interaction">
    <interactant intactId="EBI-739773">
        <id>Q9BSW2</id>
    </interactant>
    <interactant intactId="EBI-749727">
        <id>Q8NDB6</id>
        <label>FAM156A</label>
    </interactant>
    <organismsDiffer>false</organismsDiffer>
    <experiments>3</experiments>
</comment>
<comment type="interaction">
    <interactant intactId="EBI-739773">
        <id>Q9BSW2</id>
    </interactant>
    <interactant intactId="EBI-12845222">
        <id>Q9NVL1-2</id>
        <label>FAM86C1P</label>
    </interactant>
    <organismsDiffer>false</organismsDiffer>
    <experiments>3</experiments>
</comment>
<comment type="interaction">
    <interactant intactId="EBI-739773">
        <id>Q9BSW2</id>
    </interactant>
    <interactant intactId="EBI-744771">
        <id>O75344</id>
        <label>FKBP6</label>
    </interactant>
    <organismsDiffer>false</organismsDiffer>
    <experiments>3</experiments>
</comment>
<comment type="interaction">
    <interactant intactId="EBI-739773">
        <id>Q9BSW2</id>
    </interactant>
    <interactant intactId="EBI-947774">
        <id>O75420</id>
        <label>GIGYF1</label>
    </interactant>
    <organismsDiffer>false</organismsDiffer>
    <experiments>3</experiments>
</comment>
<comment type="interaction">
    <interactant intactId="EBI-739773">
        <id>Q9BSW2</id>
    </interactant>
    <interactant intactId="EBI-618309">
        <id>Q08379</id>
        <label>GOLGA2</label>
    </interactant>
    <organismsDiffer>false</organismsDiffer>
    <experiments>3</experiments>
</comment>
<comment type="interaction">
    <interactant intactId="EBI-739773">
        <id>Q9BSW2</id>
    </interactant>
    <interactant intactId="EBI-466029">
        <id>P42858</id>
        <label>HTT</label>
    </interactant>
    <organismsDiffer>false</organismsDiffer>
    <experiments>9</experiments>
</comment>
<comment type="interaction">
    <interactant intactId="EBI-739773">
        <id>Q9BSW2</id>
    </interactant>
    <interactant intactId="EBI-948266">
        <id>O14901</id>
        <label>KLF11</label>
    </interactant>
    <organismsDiffer>false</organismsDiffer>
    <experiments>3</experiments>
</comment>
<comment type="interaction">
    <interactant intactId="EBI-739773">
        <id>Q9BSW2</id>
    </interactant>
    <interactant intactId="EBI-948001">
        <id>Q15323</id>
        <label>KRT31</label>
    </interactant>
    <organismsDiffer>false</organismsDiffer>
    <experiments>3</experiments>
</comment>
<comment type="interaction">
    <interactant intactId="EBI-739773">
        <id>Q9BSW2</id>
    </interactant>
    <interactant intactId="EBI-2949715">
        <id>O95678</id>
        <label>KRT75</label>
    </interactant>
    <organismsDiffer>false</organismsDiffer>
    <experiments>3</experiments>
</comment>
<comment type="interaction">
    <interactant intactId="EBI-739773">
        <id>Q9BSW2</id>
    </interactant>
    <interactant intactId="EBI-1048945">
        <id>Q3LI72</id>
        <label>KRTAP19-5</label>
    </interactant>
    <organismsDiffer>false</organismsDiffer>
    <experiments>3</experiments>
</comment>
<comment type="interaction">
    <interactant intactId="EBI-739773">
        <id>Q9BSW2</id>
    </interactant>
    <interactant intactId="EBI-473196">
        <id>Q5T3J3</id>
        <label>LRIF1</label>
    </interactant>
    <organismsDiffer>false</organismsDiffer>
    <experiments>3</experiments>
</comment>
<comment type="interaction">
    <interactant intactId="EBI-739773">
        <id>Q9BSW2</id>
    </interactant>
    <interactant intactId="EBI-1565483">
        <id>Q8NEM0</id>
        <label>MCPH1</label>
    </interactant>
    <organismsDiffer>false</organismsDiffer>
    <experiments>2</experiments>
</comment>
<comment type="interaction">
    <interactant intactId="EBI-739773">
        <id>Q9BSW2</id>
    </interactant>
    <interactant intactId="EBI-724076">
        <id>Q99750</id>
        <label>MDFI</label>
    </interactant>
    <organismsDiffer>false</organismsDiffer>
    <experiments>3</experiments>
</comment>
<comment type="interaction">
    <interactant intactId="EBI-739773">
        <id>Q9BSW2</id>
    </interactant>
    <interactant intactId="EBI-10172526">
        <id>Q9UJV3-2</id>
        <label>MID2</label>
    </interactant>
    <organismsDiffer>false</organismsDiffer>
    <experiments>3</experiments>
</comment>
<comment type="interaction">
    <interactant intactId="EBI-739773">
        <id>Q9BSW2</id>
    </interactant>
    <interactant intactId="EBI-2340269">
        <id>Q13064</id>
        <label>MKRN3</label>
    </interactant>
    <organismsDiffer>false</organismsDiffer>
    <experiments>3</experiments>
</comment>
<comment type="interaction">
    <interactant intactId="EBI-739773">
        <id>Q9BSW2</id>
    </interactant>
    <interactant intactId="EBI-945833">
        <id>Q7Z3S9</id>
        <label>NOTCH2NLA</label>
    </interactant>
    <organismsDiffer>false</organismsDiffer>
    <experiments>3</experiments>
</comment>
<comment type="interaction">
    <interactant intactId="EBI-739773">
        <id>Q9BSW2</id>
    </interactant>
    <interactant intactId="EBI-536879">
        <id>O43482</id>
        <label>OIP5</label>
    </interactant>
    <organismsDiffer>false</organismsDiffer>
    <experiments>3</experiments>
</comment>
<comment type="interaction">
    <interactant intactId="EBI-739773">
        <id>Q9BSW2</id>
    </interactant>
    <interactant intactId="EBI-2291476">
        <id>Q96D31</id>
        <label>ORAI1</label>
    </interactant>
    <organismsDiffer>false</organismsDiffer>
    <experiments>6</experiments>
</comment>
<comment type="interaction">
    <interactant intactId="EBI-739773">
        <id>Q9BSW2</id>
    </interactant>
    <interactant intactId="EBI-10171633">
        <id>Q96PV4</id>
        <label>PNMA5</label>
    </interactant>
    <organismsDiffer>false</organismsDiffer>
    <experiments>3</experiments>
</comment>
<comment type="interaction">
    <interactant intactId="EBI-739773">
        <id>Q9BSW2</id>
    </interactant>
    <interactant intactId="EBI-1055079">
        <id>O15160</id>
        <label>POLR1C</label>
    </interactant>
    <organismsDiffer>false</organismsDiffer>
    <experiments>3</experiments>
</comment>
<comment type="interaction">
    <interactant intactId="EBI-739773">
        <id>Q9BSW2</id>
    </interactant>
    <interactant intactId="EBI-1210429">
        <id>Q9NYW8</id>
        <label>RBAK</label>
    </interactant>
    <organismsDiffer>false</organismsDiffer>
    <experiments>3</experiments>
</comment>
<comment type="interaction">
    <interactant intactId="EBI-739773">
        <id>Q9BSW2</id>
    </interactant>
    <interactant intactId="EBI-18560266">
        <id>Q92753-1</id>
        <label>RORB</label>
    </interactant>
    <organismsDiffer>false</organismsDiffer>
    <experiments>3</experiments>
</comment>
<comment type="interaction">
    <interactant intactId="EBI-739773">
        <id>Q9BSW2</id>
    </interactant>
    <interactant intactId="EBI-10269374">
        <id>Q8ND83</id>
        <label>SLAIN1</label>
    </interactant>
    <organismsDiffer>false</organismsDiffer>
    <experiments>3</experiments>
</comment>
<comment type="interaction">
    <interactant intactId="EBI-739773">
        <id>Q9BSW2</id>
    </interactant>
    <interactant intactId="EBI-741237">
        <id>O60504</id>
        <label>SORBS3</label>
    </interactant>
    <organismsDiffer>false</organismsDiffer>
    <experiments>3</experiments>
</comment>
<comment type="interaction">
    <interactant intactId="EBI-739773">
        <id>Q9BSW2</id>
    </interactant>
    <interactant intactId="EBI-5235340">
        <id>Q7Z699</id>
        <label>SPRED1</label>
    </interactant>
    <organismsDiffer>false</organismsDiffer>
    <experiments>3</experiments>
</comment>
<comment type="interaction">
    <interactant intactId="EBI-739773">
        <id>Q9BSW2</id>
    </interactant>
    <interactant intactId="EBI-448878">
        <id>Q13586</id>
        <label>STIM1</label>
    </interactant>
    <organismsDiffer>false</organismsDiffer>
    <experiments>3</experiments>
</comment>
<comment type="interaction">
    <interactant intactId="EBI-739773">
        <id>Q9BSW2</id>
    </interactant>
    <interactant intactId="EBI-717810">
        <id>Q08117</id>
        <label>TLE5</label>
    </interactant>
    <organismsDiffer>false</organismsDiffer>
    <experiments>4</experiments>
</comment>
<comment type="interaction">
    <interactant intactId="EBI-739773">
        <id>Q9BSW2</id>
    </interactant>
    <interactant intactId="EBI-11741437">
        <id>Q08117-2</id>
        <label>TLE5</label>
    </interactant>
    <organismsDiffer>false</organismsDiffer>
    <experiments>3</experiments>
</comment>
<comment type="interaction">
    <interactant intactId="EBI-739773">
        <id>Q9BSW2</id>
    </interactant>
    <interactant intactId="EBI-359224">
        <id>Q13077</id>
        <label>TRAF1</label>
    </interactant>
    <organismsDiffer>false</organismsDiffer>
    <experiments>3</experiments>
</comment>
<comment type="interaction">
    <interactant intactId="EBI-739773">
        <id>Q9BSW2</id>
    </interactant>
    <interactant intactId="EBI-743272">
        <id>O75604</id>
        <label>USP2</label>
    </interactant>
    <organismsDiffer>false</organismsDiffer>
    <experiments>3</experiments>
</comment>
<comment type="interaction">
    <interactant intactId="EBI-739773">
        <id>Q9BSW2</id>
    </interactant>
    <interactant intactId="EBI-14104088">
        <id>Q53FD0-2</id>
        <label>ZC2HC1C</label>
    </interactant>
    <organismsDiffer>false</organismsDiffer>
    <experiments>3</experiments>
</comment>
<comment type="interaction">
    <interactant intactId="EBI-739773">
        <id>Q9BSW2</id>
    </interactant>
    <interactant intactId="EBI-717634">
        <id>P17024</id>
        <label>ZNF20</label>
    </interactant>
    <organismsDiffer>false</organismsDiffer>
    <experiments>3</experiments>
</comment>
<comment type="interaction">
    <interactant intactId="EBI-739773">
        <id>Q9BSW2</id>
    </interactant>
    <interactant intactId="EBI-625509">
        <id>Q8N720</id>
        <label>ZNF655</label>
    </interactant>
    <organismsDiffer>false</organismsDiffer>
    <experiments>3</experiments>
</comment>
<comment type="interaction">
    <interactant intactId="EBI-739773">
        <id>Q9BSW2</id>
    </interactant>
    <interactant intactId="EBI-3957603">
        <id>P09022</id>
        <label>Hoxa1</label>
    </interactant>
    <organismsDiffer>true</organismsDiffer>
    <experiments>3</experiments>
</comment>
<comment type="subcellular location">
    <molecule>Isoform 1</molecule>
    <subcellularLocation>
        <location evidence="7">Cytoplasm</location>
    </subcellularLocation>
</comment>
<comment type="subcellular location">
    <molecule>Isoform 2</molecule>
    <subcellularLocation>
        <location evidence="11 12">Cytoplasm</location>
    </subcellularLocation>
    <subcellularLocation>
        <location evidence="11 12">Cytoplasm</location>
        <location evidence="11 12">Cytoskeleton</location>
        <location evidence="11 12">Microtubule organizing center</location>
    </subcellularLocation>
    <subcellularLocation>
        <location evidence="11">Cell membrane</location>
    </subcellularLocation>
    <subcellularLocation>
        <location evidence="9">Golgi apparatus membrane</location>
    </subcellularLocation>
    <subcellularLocation>
        <location evidence="9">Golgi apparatus</location>
        <location evidence="9">trans-Golgi network membrane</location>
    </subcellularLocation>
    <subcellularLocation>
        <location evidence="9">Vesicle</location>
    </subcellularLocation>
    <text evidence="9 11 12">T-cell activation-induced elevation of intracellular of Ca(2+) stimulates its transport toward the microtubule organizing center (MTOC) (PubMed:30814157). Histamine stimulation induces a trafficking to the MTOC in a GTP-binding-dependent but Ca(2+)-binding-independent manner (PubMed:31092558). Localizes to Golgi membrane in resting T-cells and upon its interaction with VAV1, is translocated from the Golgi membrane to the immunological synapse via subsynaptic vesicles (PubMed:27016526). Its localization in the Golgi membrane requires isoprenylation and GTP-binding (PubMed:27016526).</text>
</comment>
<comment type="alternative products">
    <event type="alternative splicing"/>
    <isoform>
        <id>Q9BSW2-2</id>
        <name>2</name>
        <name>CRACR2A-L</name>
        <name evidence="14">CRACR2A-A</name>
        <sequence type="displayed"/>
    </isoform>
    <isoform>
        <id>Q9BSW2-1</id>
        <name>1</name>
        <name>CRACR2A-S</name>
        <name evidence="14">CRACR2A-C</name>
        <sequence type="described" ref="VSP_060977 VSP_060978"/>
    </isoform>
</comment>
<comment type="tissue specificity">
    <molecule>Isoform 1</molecule>
    <text evidence="9">Expressed in the Jurkat T-cell line.</text>
</comment>
<comment type="tissue specificity">
    <molecule>Isoform 2</molecule>
    <text evidence="8 9 11 12">Expressed in endothelial cells (PubMed:25475730). Expressed in Weibel-Palade bodies (which are P-selectin/SELP negative) in endothelial cells (PubMed:31092558). Expressed in the Jurkat T-cell line (PubMed:27016526, PubMed:30814157).</text>
</comment>
<comment type="similarity">
    <text evidence="16">Belongs to the EFCAB4 family.</text>
</comment>
<gene>
    <name evidence="18" type="primary">CRACR2A</name>
    <name type="synonym">EFCAB4B</name>
    <name evidence="15" type="synonym">RAB46</name>
</gene>
<feature type="chain" id="PRO_0000283046" description="EF-hand calcium-binding domain-containing protein 4B">
    <location>
        <begin position="1"/>
        <end position="731"/>
    </location>
</feature>
<feature type="domain" description="EF-hand" evidence="3">
    <location>
        <begin position="84"/>
        <end position="119"/>
    </location>
</feature>
<feature type="region of interest" description="Disordered" evidence="5">
    <location>
        <begin position="1"/>
        <end position="45"/>
    </location>
</feature>
<feature type="region of interest" description="Proline-rich domain (PRD) which mediates interaction with VAV1" evidence="9">
    <location>
        <begin position="349"/>
        <end position="540"/>
    </location>
</feature>
<feature type="region of interest" description="Disordered" evidence="5">
    <location>
        <begin position="426"/>
        <end position="466"/>
    </location>
</feature>
<feature type="region of interest" description="Disordered" evidence="5">
    <location>
        <begin position="494"/>
        <end position="528"/>
    </location>
</feature>
<feature type="region of interest" description="Switch-I" evidence="4">
    <location>
        <begin position="572"/>
        <end position="580"/>
    </location>
</feature>
<feature type="region of interest" description="Switch-II" evidence="4">
    <location>
        <begin position="603"/>
        <end position="619"/>
    </location>
</feature>
<feature type="coiled-coil region" evidence="2">
    <location>
        <begin position="201"/>
        <end position="382"/>
    </location>
</feature>
<feature type="binding site" evidence="3">
    <location>
        <position position="97"/>
    </location>
    <ligand>
        <name>Ca(2+)</name>
        <dbReference type="ChEBI" id="CHEBI:29108"/>
    </ligand>
</feature>
<feature type="binding site" evidence="3">
    <location>
        <position position="99"/>
    </location>
    <ligand>
        <name>Ca(2+)</name>
        <dbReference type="ChEBI" id="CHEBI:29108"/>
    </ligand>
</feature>
<feature type="binding site" evidence="3">
    <location>
        <position position="101"/>
    </location>
    <ligand>
        <name>Ca(2+)</name>
        <dbReference type="ChEBI" id="CHEBI:29108"/>
    </ligand>
</feature>
<feature type="binding site" evidence="3">
    <location>
        <position position="103"/>
    </location>
    <ligand>
        <name>Ca(2+)</name>
        <dbReference type="ChEBI" id="CHEBI:29108"/>
    </ligand>
</feature>
<feature type="binding site" evidence="3">
    <location>
        <position position="108"/>
    </location>
    <ligand>
        <name>Ca(2+)</name>
        <dbReference type="ChEBI" id="CHEBI:29108"/>
    </ligand>
</feature>
<feature type="binding site" evidence="1">
    <location>
        <position position="554"/>
    </location>
    <ligand>
        <name>GTP</name>
        <dbReference type="ChEBI" id="CHEBI:37565"/>
    </ligand>
</feature>
<feature type="binding site" evidence="1">
    <location>
        <position position="556"/>
    </location>
    <ligand>
        <name>GTP</name>
        <dbReference type="ChEBI" id="CHEBI:37565"/>
    </ligand>
</feature>
<feature type="binding site" evidence="1">
    <location>
        <position position="557"/>
    </location>
    <ligand>
        <name>GTP</name>
        <dbReference type="ChEBI" id="CHEBI:37565"/>
    </ligand>
</feature>
<feature type="binding site" evidence="1">
    <location>
        <position position="558"/>
    </location>
    <ligand>
        <name>GTP</name>
        <dbReference type="ChEBI" id="CHEBI:37565"/>
    </ligand>
</feature>
<feature type="binding site" evidence="1">
    <location>
        <position position="559"/>
    </location>
    <ligand>
        <name>GTP</name>
        <dbReference type="ChEBI" id="CHEBI:37565"/>
    </ligand>
</feature>
<feature type="binding site" evidence="1">
    <location>
        <position position="559"/>
    </location>
    <ligand>
        <name>Mg(2+)</name>
        <dbReference type="ChEBI" id="CHEBI:18420"/>
    </ligand>
</feature>
<feature type="binding site" evidence="1">
    <location>
        <position position="560"/>
    </location>
    <ligand>
        <name>GTP</name>
        <dbReference type="ChEBI" id="CHEBI:37565"/>
    </ligand>
</feature>
<feature type="binding site" evidence="1">
    <location>
        <position position="571"/>
    </location>
    <ligand>
        <name>GTP</name>
        <dbReference type="ChEBI" id="CHEBI:37565"/>
    </ligand>
</feature>
<feature type="binding site" evidence="1">
    <location>
        <position position="572"/>
    </location>
    <ligand>
        <name>GTP</name>
        <dbReference type="ChEBI" id="CHEBI:37565"/>
    </ligand>
</feature>
<feature type="binding site" evidence="1">
    <location>
        <position position="577"/>
    </location>
    <ligand>
        <name>GTP</name>
        <dbReference type="ChEBI" id="CHEBI:37565"/>
    </ligand>
</feature>
<feature type="binding site" evidence="1">
    <location>
        <position position="577"/>
    </location>
    <ligand>
        <name>Mg(2+)</name>
        <dbReference type="ChEBI" id="CHEBI:18420"/>
    </ligand>
</feature>
<feature type="binding site" evidence="1">
    <location>
        <position position="600"/>
    </location>
    <ligand>
        <name>Mg(2+)</name>
        <dbReference type="ChEBI" id="CHEBI:18420"/>
    </ligand>
</feature>
<feature type="binding site" evidence="1">
    <location>
        <position position="603"/>
    </location>
    <ligand>
        <name>GTP</name>
        <dbReference type="ChEBI" id="CHEBI:37565"/>
    </ligand>
</feature>
<feature type="binding site" evidence="1">
    <location>
        <position position="658"/>
    </location>
    <ligand>
        <name>GTP</name>
        <dbReference type="ChEBI" id="CHEBI:37565"/>
    </ligand>
</feature>
<feature type="binding site" evidence="1">
    <location>
        <position position="659"/>
    </location>
    <ligand>
        <name>GTP</name>
        <dbReference type="ChEBI" id="CHEBI:37565"/>
    </ligand>
</feature>
<feature type="binding site" evidence="1">
    <location>
        <position position="661"/>
    </location>
    <ligand>
        <name>GTP</name>
        <dbReference type="ChEBI" id="CHEBI:37565"/>
    </ligand>
</feature>
<feature type="binding site" evidence="1">
    <location>
        <position position="689"/>
    </location>
    <ligand>
        <name>GTP</name>
        <dbReference type="ChEBI" id="CHEBI:37565"/>
    </ligand>
</feature>
<feature type="lipid moiety-binding region" description="S-geranylgeranyl cysteine" evidence="9">
    <location>
        <position position="729"/>
    </location>
</feature>
<feature type="splice variant" id="VSP_060977" description="In isoform 1." evidence="13">
    <original>ERNKHLRDERDICFQKNKAAKA</original>
    <variation>CVGGHWPVLRAPPRSLGSEGPV</variation>
    <location>
        <begin position="374"/>
        <end position="395"/>
    </location>
</feature>
<feature type="splice variant" id="VSP_060978" description="In isoform 1." evidence="13">
    <location>
        <begin position="396"/>
        <end position="731"/>
    </location>
</feature>
<feature type="sequence variant" id="VAR_031483" description="In dbSNP:rs9788233.">
    <original>R</original>
    <variation>G</variation>
    <location>
        <position position="7"/>
    </location>
</feature>
<feature type="sequence variant" id="VAR_031484" description="In dbSNP:rs17836273.">
    <original>A</original>
    <variation>T</variation>
    <location>
        <position position="98"/>
    </location>
</feature>
<feature type="sequence variant" id="VAR_031485" description="In dbSNP:rs242017." evidence="6">
    <original>A</original>
    <variation>V</variation>
    <location>
        <position position="128"/>
    </location>
</feature>
<feature type="sequence variant" id="VAR_031486" description="In dbSNP:rs34088152.">
    <original>H</original>
    <variation>P</variation>
    <location>
        <position position="136"/>
    </location>
</feature>
<feature type="sequence variant" id="VAR_031487" description="In dbSNP:rs242018." evidence="6">
    <original>E</original>
    <variation>K</variation>
    <location>
        <position position="154"/>
    </location>
</feature>
<feature type="sequence variant" id="VAR_031488" description="In dbSNP:rs36030417.">
    <original>H</original>
    <variation>Q</variation>
    <location>
        <position position="212"/>
    </location>
</feature>
<feature type="mutagenesis site" description="Loss of calcium-binding and interaction with the dynein-dynactin complex; when associated with A-65; A-97 and A-99." evidence="11">
    <original>D</original>
    <variation>A</variation>
    <location>
        <position position="63"/>
    </location>
</feature>
<feature type="mutagenesis site" description="Loss of calcium-binding and interaction with the dynein-dynactin complex; when associated with A-63; A-97 and A-99." evidence="11">
    <original>E</original>
    <variation>A</variation>
    <location>
        <position position="65"/>
    </location>
</feature>
<feature type="mutagenesis site" description="In EF2MUT; enhanced STIM1 clustering and elevated cytoplasmic Ca2+, thereby causing cell death in T-cells. Loss of calcium-binding. Can rescue JNK phosphorylation when expressed in CRACR2A-depleted T-cells. No effect on its localization to the Golgi membrane." evidence="7 9 12">
    <original>DAD</original>
    <variation>AAA</variation>
    <location>
        <begin position="97"/>
        <end position="99"/>
    </location>
</feature>
<feature type="mutagenesis site" description="Loss of calcium-binding and interaction with the dynein-dynactin complex; when associated with A-63; A-65 and A-99." evidence="11">
    <original>D</original>
    <variation>A</variation>
    <location>
        <position position="97"/>
    </location>
</feature>
<feature type="mutagenesis site" description="Loss of calcium-binding and interaction with the dynein-dynactin complex; when associated with A-63; A-65 and A-97." evidence="11">
    <original>D</original>
    <variation>A</variation>
    <location>
        <position position="99"/>
    </location>
</feature>
<feature type="mutagenesis site" description="GDP-binding mutant with reduced GTPase activity and protein stability. Reduced ability to activate JNK signaling pathway. Failure to localize to the microtubule organizing center and Golgi apparatus membrane, instead shows a predominant localization to the cytoplasm." evidence="9 12">
    <original>T</original>
    <variation>N</variation>
    <location>
        <position position="559"/>
    </location>
</feature>
<feature type="mutagenesis site" description="GTP-binding mutant with reduced GTPase activity but increased protein stability. Increased ability to activate JNK signaling pathway. No effect on its localization to the microtubule organizing center or Golgi apparatus membrane." evidence="9 12">
    <original>Q</original>
    <variation>L</variation>
    <location>
        <position position="604"/>
    </location>
</feature>
<feature type="mutagenesis site" description="GTP/GDP-binding defective mutant with reduced GTPase activity and protein stability. Failure to localize to the microtubule organizing center and Golgi apparatus membrane, instead shows a predominant localization to the cytoplasm." evidence="9 12">
    <original>N</original>
    <variation>I</variation>
    <location>
        <position position="658"/>
    </location>
</feature>
<feature type="mutagenesis site" description="Failure to localize to the Golgi membrane." evidence="9">
    <location>
        <begin position="729"/>
        <end position="731"/>
    </location>
</feature>
<feature type="sequence conflict" description="In Ref. 4 and 5." evidence="16" ref="4 5">
    <original>S</original>
    <variation>SS</variation>
    <location>
        <position position="424"/>
    </location>
</feature>
<feature type="helix" evidence="19">
    <location>
        <begin position="48"/>
        <end position="62"/>
    </location>
</feature>
<feature type="strand" evidence="19">
    <location>
        <begin position="68"/>
        <end position="71"/>
    </location>
</feature>
<feature type="helix" evidence="19">
    <location>
        <begin position="74"/>
        <end position="77"/>
    </location>
</feature>
<feature type="helix" evidence="19">
    <location>
        <begin position="78"/>
        <end position="80"/>
    </location>
</feature>
<feature type="strand" evidence="19">
    <location>
        <begin position="82"/>
        <end position="84"/>
    </location>
</feature>
<feature type="helix" evidence="19">
    <location>
        <begin position="86"/>
        <end position="96"/>
    </location>
</feature>
<feature type="strand" evidence="19">
    <location>
        <begin position="102"/>
        <end position="104"/>
    </location>
</feature>
<feature type="helix" evidence="19">
    <location>
        <begin position="106"/>
        <end position="117"/>
    </location>
</feature>
<reference key="1">
    <citation type="journal article" date="2004" name="Nat. Genet.">
        <title>Complete sequencing and characterization of 21,243 full-length human cDNAs.</title>
        <authorList>
            <person name="Ota T."/>
            <person name="Suzuki Y."/>
            <person name="Nishikawa T."/>
            <person name="Otsuki T."/>
            <person name="Sugiyama T."/>
            <person name="Irie R."/>
            <person name="Wakamatsu A."/>
            <person name="Hayashi K."/>
            <person name="Sato H."/>
            <person name="Nagai K."/>
            <person name="Kimura K."/>
            <person name="Makita H."/>
            <person name="Sekine M."/>
            <person name="Obayashi M."/>
            <person name="Nishi T."/>
            <person name="Shibahara T."/>
            <person name="Tanaka T."/>
            <person name="Ishii S."/>
            <person name="Yamamoto J."/>
            <person name="Saito K."/>
            <person name="Kawai Y."/>
            <person name="Isono Y."/>
            <person name="Nakamura Y."/>
            <person name="Nagahari K."/>
            <person name="Murakami K."/>
            <person name="Yasuda T."/>
            <person name="Iwayanagi T."/>
            <person name="Wagatsuma M."/>
            <person name="Shiratori A."/>
            <person name="Sudo H."/>
            <person name="Hosoiri T."/>
            <person name="Kaku Y."/>
            <person name="Kodaira H."/>
            <person name="Kondo H."/>
            <person name="Sugawara M."/>
            <person name="Takahashi M."/>
            <person name="Kanda K."/>
            <person name="Yokoi T."/>
            <person name="Furuya T."/>
            <person name="Kikkawa E."/>
            <person name="Omura Y."/>
            <person name="Abe K."/>
            <person name="Kamihara K."/>
            <person name="Katsuta N."/>
            <person name="Sato K."/>
            <person name="Tanikawa M."/>
            <person name="Yamazaki M."/>
            <person name="Ninomiya K."/>
            <person name="Ishibashi T."/>
            <person name="Yamashita H."/>
            <person name="Murakawa K."/>
            <person name="Fujimori K."/>
            <person name="Tanai H."/>
            <person name="Kimata M."/>
            <person name="Watanabe M."/>
            <person name="Hiraoka S."/>
            <person name="Chiba Y."/>
            <person name="Ishida S."/>
            <person name="Ono Y."/>
            <person name="Takiguchi S."/>
            <person name="Watanabe S."/>
            <person name="Yosida M."/>
            <person name="Hotuta T."/>
            <person name="Kusano J."/>
            <person name="Kanehori K."/>
            <person name="Takahashi-Fujii A."/>
            <person name="Hara H."/>
            <person name="Tanase T.-O."/>
            <person name="Nomura Y."/>
            <person name="Togiya S."/>
            <person name="Komai F."/>
            <person name="Hara R."/>
            <person name="Takeuchi K."/>
            <person name="Arita M."/>
            <person name="Imose N."/>
            <person name="Musashino K."/>
            <person name="Yuuki H."/>
            <person name="Oshima A."/>
            <person name="Sasaki N."/>
            <person name="Aotsuka S."/>
            <person name="Yoshikawa Y."/>
            <person name="Matsunawa H."/>
            <person name="Ichihara T."/>
            <person name="Shiohata N."/>
            <person name="Sano S."/>
            <person name="Moriya S."/>
            <person name="Momiyama H."/>
            <person name="Satoh N."/>
            <person name="Takami S."/>
            <person name="Terashima Y."/>
            <person name="Suzuki O."/>
            <person name="Nakagawa S."/>
            <person name="Senoh A."/>
            <person name="Mizoguchi H."/>
            <person name="Goto Y."/>
            <person name="Shimizu F."/>
            <person name="Wakebe H."/>
            <person name="Hishigaki H."/>
            <person name="Watanabe T."/>
            <person name="Sugiyama A."/>
            <person name="Takemoto M."/>
            <person name="Kawakami B."/>
            <person name="Yamazaki M."/>
            <person name="Watanabe K."/>
            <person name="Kumagai A."/>
            <person name="Itakura S."/>
            <person name="Fukuzumi Y."/>
            <person name="Fujimori Y."/>
            <person name="Komiyama M."/>
            <person name="Tashiro H."/>
            <person name="Tanigami A."/>
            <person name="Fujiwara T."/>
            <person name="Ono T."/>
            <person name="Yamada K."/>
            <person name="Fujii Y."/>
            <person name="Ozaki K."/>
            <person name="Hirao M."/>
            <person name="Ohmori Y."/>
            <person name="Kawabata A."/>
            <person name="Hikiji T."/>
            <person name="Kobatake N."/>
            <person name="Inagaki H."/>
            <person name="Ikema Y."/>
            <person name="Okamoto S."/>
            <person name="Okitani R."/>
            <person name="Kawakami T."/>
            <person name="Noguchi S."/>
            <person name="Itoh T."/>
            <person name="Shigeta K."/>
            <person name="Senba T."/>
            <person name="Matsumura K."/>
            <person name="Nakajima Y."/>
            <person name="Mizuno T."/>
            <person name="Morinaga M."/>
            <person name="Sasaki M."/>
            <person name="Togashi T."/>
            <person name="Oyama M."/>
            <person name="Hata H."/>
            <person name="Watanabe M."/>
            <person name="Komatsu T."/>
            <person name="Mizushima-Sugano J."/>
            <person name="Satoh T."/>
            <person name="Shirai Y."/>
            <person name="Takahashi Y."/>
            <person name="Nakagawa K."/>
            <person name="Okumura K."/>
            <person name="Nagase T."/>
            <person name="Nomura N."/>
            <person name="Kikuchi H."/>
            <person name="Masuho Y."/>
            <person name="Yamashita R."/>
            <person name="Nakai K."/>
            <person name="Yada T."/>
            <person name="Nakamura Y."/>
            <person name="Ohara O."/>
            <person name="Isogai T."/>
            <person name="Sugano S."/>
        </authorList>
    </citation>
    <scope>NUCLEOTIDE SEQUENCE [LARGE SCALE MRNA] (ISOFORM 2)</scope>
    <source>
        <tissue>Trachea</tissue>
    </source>
</reference>
<reference key="2">
    <citation type="journal article" date="2006" name="Nature">
        <title>The finished DNA sequence of human chromosome 12.</title>
        <authorList>
            <person name="Scherer S.E."/>
            <person name="Muzny D.M."/>
            <person name="Buhay C.J."/>
            <person name="Chen R."/>
            <person name="Cree A."/>
            <person name="Ding Y."/>
            <person name="Dugan-Rocha S."/>
            <person name="Gill R."/>
            <person name="Gunaratne P."/>
            <person name="Harris R.A."/>
            <person name="Hawes A.C."/>
            <person name="Hernandez J."/>
            <person name="Hodgson A.V."/>
            <person name="Hume J."/>
            <person name="Jackson A."/>
            <person name="Khan Z.M."/>
            <person name="Kovar-Smith C."/>
            <person name="Lewis L.R."/>
            <person name="Lozado R.J."/>
            <person name="Metzker M.L."/>
            <person name="Milosavljevic A."/>
            <person name="Miner G.R."/>
            <person name="Montgomery K.T."/>
            <person name="Morgan M.B."/>
            <person name="Nazareth L.V."/>
            <person name="Scott G."/>
            <person name="Sodergren E."/>
            <person name="Song X.-Z."/>
            <person name="Steffen D."/>
            <person name="Lovering R.C."/>
            <person name="Wheeler D.A."/>
            <person name="Worley K.C."/>
            <person name="Yuan Y."/>
            <person name="Zhang Z."/>
            <person name="Adams C.Q."/>
            <person name="Ansari-Lari M.A."/>
            <person name="Ayele M."/>
            <person name="Brown M.J."/>
            <person name="Chen G."/>
            <person name="Chen Z."/>
            <person name="Clerc-Blankenburg K.P."/>
            <person name="Davis C."/>
            <person name="Delgado O."/>
            <person name="Dinh H.H."/>
            <person name="Draper H."/>
            <person name="Gonzalez-Garay M.L."/>
            <person name="Havlak P."/>
            <person name="Jackson L.R."/>
            <person name="Jacob L.S."/>
            <person name="Kelly S.H."/>
            <person name="Li L."/>
            <person name="Li Z."/>
            <person name="Liu J."/>
            <person name="Liu W."/>
            <person name="Lu J."/>
            <person name="Maheshwari M."/>
            <person name="Nguyen B.-V."/>
            <person name="Okwuonu G.O."/>
            <person name="Pasternak S."/>
            <person name="Perez L.M."/>
            <person name="Plopper F.J.H."/>
            <person name="Santibanez J."/>
            <person name="Shen H."/>
            <person name="Tabor P.E."/>
            <person name="Verduzco D."/>
            <person name="Waldron L."/>
            <person name="Wang Q."/>
            <person name="Williams G.A."/>
            <person name="Zhang J."/>
            <person name="Zhou J."/>
            <person name="Allen C.C."/>
            <person name="Amin A.G."/>
            <person name="Anyalebechi V."/>
            <person name="Bailey M."/>
            <person name="Barbaria J.A."/>
            <person name="Bimage K.E."/>
            <person name="Bryant N.P."/>
            <person name="Burch P.E."/>
            <person name="Burkett C.E."/>
            <person name="Burrell K.L."/>
            <person name="Calderon E."/>
            <person name="Cardenas V."/>
            <person name="Carter K."/>
            <person name="Casias K."/>
            <person name="Cavazos I."/>
            <person name="Cavazos S.R."/>
            <person name="Ceasar H."/>
            <person name="Chacko J."/>
            <person name="Chan S.N."/>
            <person name="Chavez D."/>
            <person name="Christopoulos C."/>
            <person name="Chu J."/>
            <person name="Cockrell R."/>
            <person name="Cox C.D."/>
            <person name="Dang M."/>
            <person name="Dathorne S.R."/>
            <person name="David R."/>
            <person name="Davis C.M."/>
            <person name="Davy-Carroll L."/>
            <person name="Deshazo D.R."/>
            <person name="Donlin J.E."/>
            <person name="D'Souza L."/>
            <person name="Eaves K.A."/>
            <person name="Egan A."/>
            <person name="Emery-Cohen A.J."/>
            <person name="Escotto M."/>
            <person name="Flagg N."/>
            <person name="Forbes L.D."/>
            <person name="Gabisi A.M."/>
            <person name="Garza M."/>
            <person name="Hamilton C."/>
            <person name="Henderson N."/>
            <person name="Hernandez O."/>
            <person name="Hines S."/>
            <person name="Hogues M.E."/>
            <person name="Huang M."/>
            <person name="Idlebird D.G."/>
            <person name="Johnson R."/>
            <person name="Jolivet A."/>
            <person name="Jones S."/>
            <person name="Kagan R."/>
            <person name="King L.M."/>
            <person name="Leal B."/>
            <person name="Lebow H."/>
            <person name="Lee S."/>
            <person name="LeVan J.M."/>
            <person name="Lewis L.C."/>
            <person name="London P."/>
            <person name="Lorensuhewa L.M."/>
            <person name="Loulseged H."/>
            <person name="Lovett D.A."/>
            <person name="Lucier A."/>
            <person name="Lucier R.L."/>
            <person name="Ma J."/>
            <person name="Madu R.C."/>
            <person name="Mapua P."/>
            <person name="Martindale A.D."/>
            <person name="Martinez E."/>
            <person name="Massey E."/>
            <person name="Mawhiney S."/>
            <person name="Meador M.G."/>
            <person name="Mendez S."/>
            <person name="Mercado C."/>
            <person name="Mercado I.C."/>
            <person name="Merritt C.E."/>
            <person name="Miner Z.L."/>
            <person name="Minja E."/>
            <person name="Mitchell T."/>
            <person name="Mohabbat F."/>
            <person name="Mohabbat K."/>
            <person name="Montgomery B."/>
            <person name="Moore N."/>
            <person name="Morris S."/>
            <person name="Munidasa M."/>
            <person name="Ngo R.N."/>
            <person name="Nguyen N.B."/>
            <person name="Nickerson E."/>
            <person name="Nwaokelemeh O.O."/>
            <person name="Nwokenkwo S."/>
            <person name="Obregon M."/>
            <person name="Oguh M."/>
            <person name="Oragunye N."/>
            <person name="Oviedo R.J."/>
            <person name="Parish B.J."/>
            <person name="Parker D.N."/>
            <person name="Parrish J."/>
            <person name="Parks K.L."/>
            <person name="Paul H.A."/>
            <person name="Payton B.A."/>
            <person name="Perez A."/>
            <person name="Perrin W."/>
            <person name="Pickens A."/>
            <person name="Primus E.L."/>
            <person name="Pu L.-L."/>
            <person name="Puazo M."/>
            <person name="Quiles M.M."/>
            <person name="Quiroz J.B."/>
            <person name="Rabata D."/>
            <person name="Reeves K."/>
            <person name="Ruiz S.J."/>
            <person name="Shao H."/>
            <person name="Sisson I."/>
            <person name="Sonaike T."/>
            <person name="Sorelle R.P."/>
            <person name="Sutton A.E."/>
            <person name="Svatek A.F."/>
            <person name="Svetz L.A."/>
            <person name="Tamerisa K.S."/>
            <person name="Taylor T.R."/>
            <person name="Teague B."/>
            <person name="Thomas N."/>
            <person name="Thorn R.D."/>
            <person name="Trejos Z.Y."/>
            <person name="Trevino B.K."/>
            <person name="Ukegbu O.N."/>
            <person name="Urban J.B."/>
            <person name="Vasquez L.I."/>
            <person name="Vera V.A."/>
            <person name="Villasana D.M."/>
            <person name="Wang L."/>
            <person name="Ward-Moore S."/>
            <person name="Warren J.T."/>
            <person name="Wei X."/>
            <person name="White F."/>
            <person name="Williamson A.L."/>
            <person name="Wleczyk R."/>
            <person name="Wooden H.S."/>
            <person name="Wooden S.H."/>
            <person name="Yen J."/>
            <person name="Yoon L."/>
            <person name="Yoon V."/>
            <person name="Zorrilla S.E."/>
            <person name="Nelson D."/>
            <person name="Kucherlapati R."/>
            <person name="Weinstock G."/>
            <person name="Gibbs R.A."/>
        </authorList>
    </citation>
    <scope>NUCLEOTIDE SEQUENCE [LARGE SCALE GENOMIC DNA]</scope>
</reference>
<reference key="3">
    <citation type="journal article" date="2004" name="Genome Res.">
        <title>The status, quality, and expansion of the NIH full-length cDNA project: the Mammalian Gene Collection (MGC).</title>
        <authorList>
            <consortium name="The MGC Project Team"/>
        </authorList>
    </citation>
    <scope>NUCLEOTIDE SEQUENCE [LARGE SCALE MRNA] (ISOFORM 1)</scope>
    <scope>VARIANTS VAL-128 AND LYS-154</scope>
    <source>
        <tissue>Brain</tissue>
        <tissue>Muscle</tissue>
    </source>
</reference>
<reference key="4">
    <citation type="journal article" date="2015" name="Biochem. Biophys. Res. Commun.">
        <title>Expression of a long variant of CRACR2A that belongs to the Rab GTPase protein family in endothelial cells.</title>
        <authorList>
            <person name="Wilson L.A."/>
            <person name="McKeown L."/>
            <person name="Tumova S."/>
            <person name="Li J."/>
            <person name="Beech D.J."/>
        </authorList>
    </citation>
    <scope>NUCLEOTIDE SEQUENCE [MRNA] (ISOFORM 2)</scope>
    <scope>TISSUE SPECIFICITY (ISOFORM 2)</scope>
</reference>
<reference key="5">
    <citation type="journal article" date="2016" name="Sci. Signal.">
        <title>A large Rab GTPase encoded by CRACR2A is a component of subsynaptic vesicles that transmit T cell activation signals.</title>
        <authorList>
            <person name="Srikanth S."/>
            <person name="Kim K.D."/>
            <person name="Gao Y."/>
            <person name="Woo J.S."/>
            <person name="Ghosh S."/>
            <person name="Calmettes G."/>
            <person name="Paz A."/>
            <person name="Abramson J."/>
            <person name="Jiang M."/>
            <person name="Gwack Y."/>
        </authorList>
    </citation>
    <scope>NUCLEOTIDE SEQUENCE [MRNA] (ISOFORM 2)</scope>
    <scope>FUNCTION (ISOFORMS 1 AND 2)</scope>
    <scope>SUBCELLULAR LOCATION (ISOFORM 2)</scope>
    <scope>TISSUE SPECIFICITY (ISOFORMS 1 AND 2)</scope>
    <scope>INTERACTION WITH VAV1 (ISOFORM 2)</scope>
    <scope>MUTAGENESIS OF 97-ASP--ASP-99; THR-559; GLN-604; ASN-658 AND 729-CYS--GLY-731</scope>
    <scope>ISOPRENYLATION AT CYS-729 (ISOFORM 2)</scope>
    <scope>CATALYTIC ACTIVITY</scope>
</reference>
<reference key="6">
    <citation type="journal article" date="2010" name="Nat. Cell Biol.">
        <title>A novel EF-hand protein, CRACR2A, is a cytosolic Ca2+ sensor that stabilizes CRAC channels in T cells.</title>
        <authorList>
            <person name="Srikanth S."/>
            <person name="Jung H.J."/>
            <person name="Kim K.D."/>
            <person name="Souda P."/>
            <person name="Whitelegge J."/>
            <person name="Gwack Y."/>
        </authorList>
    </citation>
    <scope>FUNCTION (ISOFORM 1)</scope>
    <scope>SUBCELLULAR LOCATION (ISOFORM 1)</scope>
    <scope>CALCIUM-BINDING (ISOFORM 1)</scope>
    <scope>INTERACTION WITH ORAI1; ORAI2; ORAI3 AND STIM1 (ISOFORM 1)</scope>
    <scope>MUTAGENESIS OF 97-ASP--ASP-99</scope>
</reference>
<reference key="7">
    <citation type="journal article" date="2018" name="J. Immunol.">
        <title>CRACR2A-Mediated TCR Signaling Promotes Local Effector Th1 and Th17 Responses.</title>
        <authorList>
            <person name="Woo J.S."/>
            <person name="Srikanth S."/>
            <person name="Kim K.D."/>
            <person name="Elsaesser H."/>
            <person name="Lu J."/>
            <person name="Pellegrini M."/>
            <person name="Brooks D.G."/>
            <person name="Sun Z."/>
            <person name="Gwack Y."/>
        </authorList>
    </citation>
    <scope>FUNCTION (ISOFORM 2)</scope>
</reference>
<reference key="8">
    <citation type="journal article" date="2019" name="J. Cell Biol.">
        <title>CRACR2a is a calcium-activated dynein adaptor protein that regulates endocytic traffic.</title>
        <authorList>
            <person name="Wang Y."/>
            <person name="Huynh W."/>
            <person name="Skokan T.D."/>
            <person name="Lu W."/>
            <person name="Weiss A."/>
            <person name="Vale R.D."/>
        </authorList>
    </citation>
    <scope>FUNCTION (ISOFORM 2)</scope>
    <scope>SUBCELLULAR LOCATION (ISOFORM 2)</scope>
    <scope>INTERACTION WITH THE DYNEIN-DYNACTIN COMPLEX (ISOFORM 2)</scope>
    <scope>MUTAGENESIS OF ASP-63; GLU-65; ASP-97 AND ASP-99</scope>
    <scope>TISSUE SPECIFICITY (ISOFORM 2)</scope>
</reference>
<reference key="9">
    <citation type="journal article" date="2019" name="J. Cell Biol.">
        <title>Rab46 integrates Ca2+ and histamine signaling to regulate selective cargo release from Weibel-Palade bodies.</title>
        <authorList>
            <person name="Miteva K.T."/>
            <person name="Pedicini L."/>
            <person name="Wilson L.A."/>
            <person name="Jayasinghe I."/>
            <person name="Slip R.G."/>
            <person name="Marszalek K."/>
            <person name="Gaunt H.J."/>
            <person name="Bartoli F."/>
            <person name="Deivasigamani S."/>
            <person name="Sobradillo D."/>
            <person name="Beech D.J."/>
            <person name="McKeown L."/>
        </authorList>
    </citation>
    <scope>FUNCTION (ISOFORM 2)</scope>
    <scope>SUBCELLULAR LOCATION (ISOFORM 2)</scope>
    <scope>INTERACTION WITH DYNC1H1 (ISOFORM 2)</scope>
    <scope>MUTAGENESIS OF THR-559; GLN-604 AND ASN-658 (ISOFORM 2)</scope>
    <scope>TISSUE SPECIFICITY (ISOFORM 2)</scope>
</reference>
<name>EFC4B_HUMAN</name>
<dbReference type="EC" id="3.6.5.2" evidence="9"/>
<dbReference type="EMBL" id="AK304017">
    <property type="protein sequence ID" value="BAG64932.1"/>
    <property type="molecule type" value="mRNA"/>
</dbReference>
<dbReference type="EMBL" id="AC005831">
    <property type="status" value="NOT_ANNOTATED_CDS"/>
    <property type="molecule type" value="Genomic_DNA"/>
</dbReference>
<dbReference type="EMBL" id="AC006207">
    <property type="status" value="NOT_ANNOTATED_CDS"/>
    <property type="molecule type" value="Genomic_DNA"/>
</dbReference>
<dbReference type="EMBL" id="KF455583">
    <property type="status" value="NOT_ANNOTATED_CDS"/>
    <property type="molecule type" value="Genomic_DNA"/>
</dbReference>
<dbReference type="EMBL" id="KF455584">
    <property type="status" value="NOT_ANNOTATED_CDS"/>
    <property type="molecule type" value="Genomic_DNA"/>
</dbReference>
<dbReference type="EMBL" id="KF455587">
    <property type="status" value="NOT_ANNOTATED_CDS"/>
    <property type="molecule type" value="Genomic_DNA"/>
</dbReference>
<dbReference type="EMBL" id="BC004524">
    <property type="protein sequence ID" value="AAH04524.1"/>
    <property type="molecule type" value="mRNA"/>
</dbReference>
<dbReference type="EMBL" id="BC150643">
    <property type="protein sequence ID" value="AAI50644.1"/>
    <property type="molecule type" value="mRNA"/>
</dbReference>
<dbReference type="CCDS" id="CCDS44803.1">
    <molecule id="Q9BSW2-2"/>
</dbReference>
<dbReference type="CCDS" id="CCDS8522.1">
    <molecule id="Q9BSW2-1"/>
</dbReference>
<dbReference type="RefSeq" id="NP_001138430.1">
    <molecule id="Q9BSW2-2"/>
    <property type="nucleotide sequence ID" value="NM_001144958.2"/>
</dbReference>
<dbReference type="RefSeq" id="NP_116069.1">
    <molecule id="Q9BSW2-1"/>
    <property type="nucleotide sequence ID" value="NM_032680.4"/>
</dbReference>
<dbReference type="PDB" id="6PSD">
    <property type="method" value="X-ray"/>
    <property type="resolution" value="2.66 A"/>
    <property type="chains" value="A/C/E/G/I/K/M/O=47-121"/>
</dbReference>
<dbReference type="PDBsum" id="6PSD"/>
<dbReference type="SMR" id="Q9BSW2"/>
<dbReference type="BioGRID" id="124247">
    <property type="interactions" value="72"/>
</dbReference>
<dbReference type="FunCoup" id="Q9BSW2">
    <property type="interactions" value="169"/>
</dbReference>
<dbReference type="IntAct" id="Q9BSW2">
    <property type="interactions" value="59"/>
</dbReference>
<dbReference type="MINT" id="Q9BSW2"/>
<dbReference type="STRING" id="9606.ENSP00000409382"/>
<dbReference type="BindingDB" id="Q9BSW2"/>
<dbReference type="ChEMBL" id="CHEMBL3638353"/>
<dbReference type="iPTMnet" id="Q9BSW2"/>
<dbReference type="MetOSite" id="Q9BSW2"/>
<dbReference type="PhosphoSitePlus" id="Q9BSW2"/>
<dbReference type="BioMuta" id="CRACR2A"/>
<dbReference type="DMDM" id="74761240"/>
<dbReference type="CPTAC" id="CPTAC-1026"/>
<dbReference type="jPOST" id="Q9BSW2"/>
<dbReference type="MassIVE" id="Q9BSW2"/>
<dbReference type="PaxDb" id="9606-ENSP00000409382"/>
<dbReference type="PeptideAtlas" id="Q9BSW2"/>
<dbReference type="ProteomicsDB" id="78930">
    <molecule id="Q9BSW2-1"/>
</dbReference>
<dbReference type="ProteomicsDB" id="78931">
    <molecule id="Q9BSW2-2"/>
</dbReference>
<dbReference type="Pumba" id="Q9BSW2"/>
<dbReference type="TopDownProteomics" id="Q9BSW2-1">
    <molecule id="Q9BSW2-1"/>
</dbReference>
<dbReference type="TopDownProteomics" id="Q9BSW2-2">
    <molecule id="Q9BSW2-2"/>
</dbReference>
<dbReference type="Antibodypedia" id="22229">
    <property type="antibodies" value="187 antibodies from 30 providers"/>
</dbReference>
<dbReference type="DNASU" id="84766"/>
<dbReference type="Ensembl" id="ENST00000252322.1">
    <molecule id="Q9BSW2-1"/>
    <property type="protein sequence ID" value="ENSP00000252322.1"/>
    <property type="gene ID" value="ENSG00000130038.10"/>
</dbReference>
<dbReference type="Ensembl" id="ENST00000440314.7">
    <molecule id="Q9BSW2-2"/>
    <property type="protein sequence ID" value="ENSP00000409382.2"/>
    <property type="gene ID" value="ENSG00000130038.10"/>
</dbReference>
<dbReference type="GeneID" id="84766"/>
<dbReference type="KEGG" id="hsa:84766"/>
<dbReference type="MANE-Select" id="ENST00000440314.7">
    <property type="protein sequence ID" value="ENSP00000409382.2"/>
    <property type="RefSeq nucleotide sequence ID" value="NM_001144958.2"/>
    <property type="RefSeq protein sequence ID" value="NP_001138430.1"/>
</dbReference>
<dbReference type="UCSC" id="uc001qmj.3">
    <molecule id="Q9BSW2-2"/>
    <property type="organism name" value="human"/>
</dbReference>
<dbReference type="AGR" id="HGNC:28657"/>
<dbReference type="CTD" id="84766"/>
<dbReference type="DisGeNET" id="84766"/>
<dbReference type="GeneCards" id="CRACR2A"/>
<dbReference type="HGNC" id="HGNC:28657">
    <property type="gene designation" value="CRACR2A"/>
</dbReference>
<dbReference type="HPA" id="ENSG00000130038">
    <property type="expression patterns" value="Tissue enhanced (bone marrow, intestine, salivary gland)"/>
</dbReference>
<dbReference type="MIM" id="614178">
    <property type="type" value="gene"/>
</dbReference>
<dbReference type="neXtProt" id="NX_Q9BSW2"/>
<dbReference type="OpenTargets" id="ENSG00000130038"/>
<dbReference type="PharmGKB" id="PA144596438"/>
<dbReference type="VEuPathDB" id="HostDB:ENSG00000130038"/>
<dbReference type="eggNOG" id="KOG0078">
    <property type="taxonomic scope" value="Eukaryota"/>
</dbReference>
<dbReference type="GeneTree" id="ENSGT00440000033504"/>
<dbReference type="HOGENOM" id="CLU_023178_0_0_1"/>
<dbReference type="InParanoid" id="Q9BSW2"/>
<dbReference type="OMA" id="KKSCCIR"/>
<dbReference type="OrthoDB" id="9989112at2759"/>
<dbReference type="PAN-GO" id="Q9BSW2">
    <property type="GO annotations" value="11 GO annotations based on evolutionary models"/>
</dbReference>
<dbReference type="PhylomeDB" id="Q9BSW2"/>
<dbReference type="TreeFam" id="TF329556"/>
<dbReference type="PathwayCommons" id="Q9BSW2"/>
<dbReference type="Reactome" id="R-HSA-6798695">
    <property type="pathway name" value="Neutrophil degranulation"/>
</dbReference>
<dbReference type="SignaLink" id="Q9BSW2"/>
<dbReference type="BioGRID-ORCS" id="84766">
    <property type="hits" value="14 hits in 1154 CRISPR screens"/>
</dbReference>
<dbReference type="ChiTaRS" id="CRACR2A">
    <property type="organism name" value="human"/>
</dbReference>
<dbReference type="GenomeRNAi" id="84766"/>
<dbReference type="Pharos" id="Q9BSW2">
    <property type="development level" value="Tchem"/>
</dbReference>
<dbReference type="PRO" id="PR:Q9BSW2"/>
<dbReference type="Proteomes" id="UP000005640">
    <property type="component" value="Chromosome 12"/>
</dbReference>
<dbReference type="RNAct" id="Q9BSW2">
    <property type="molecule type" value="protein"/>
</dbReference>
<dbReference type="Bgee" id="ENSG00000130038">
    <property type="expression patterns" value="Expressed in parotid gland and 145 other cell types or tissues"/>
</dbReference>
<dbReference type="ExpressionAtlas" id="Q9BSW2">
    <property type="expression patterns" value="baseline and differential"/>
</dbReference>
<dbReference type="GO" id="GO:0005737">
    <property type="term" value="C:cytoplasm"/>
    <property type="evidence" value="ECO:0000314"/>
    <property type="project" value="UniProtKB"/>
</dbReference>
<dbReference type="GO" id="GO:0005576">
    <property type="term" value="C:extracellular region"/>
    <property type="evidence" value="ECO:0000304"/>
    <property type="project" value="Reactome"/>
</dbReference>
<dbReference type="GO" id="GO:0000139">
    <property type="term" value="C:Golgi membrane"/>
    <property type="evidence" value="ECO:0000314"/>
    <property type="project" value="UniProtKB"/>
</dbReference>
<dbReference type="GO" id="GO:0001772">
    <property type="term" value="C:immunological synapse"/>
    <property type="evidence" value="ECO:0000314"/>
    <property type="project" value="UniProtKB"/>
</dbReference>
<dbReference type="GO" id="GO:0016020">
    <property type="term" value="C:membrane"/>
    <property type="evidence" value="ECO:0007005"/>
    <property type="project" value="UniProtKB"/>
</dbReference>
<dbReference type="GO" id="GO:0005815">
    <property type="term" value="C:microtubule organizing center"/>
    <property type="evidence" value="ECO:0000314"/>
    <property type="project" value="UniProtKB"/>
</dbReference>
<dbReference type="GO" id="GO:0005886">
    <property type="term" value="C:plasma membrane"/>
    <property type="evidence" value="ECO:0000314"/>
    <property type="project" value="UniProtKB"/>
</dbReference>
<dbReference type="GO" id="GO:0035580">
    <property type="term" value="C:specific granule lumen"/>
    <property type="evidence" value="ECO:0000304"/>
    <property type="project" value="Reactome"/>
</dbReference>
<dbReference type="GO" id="GO:0032588">
    <property type="term" value="C:trans-Golgi network membrane"/>
    <property type="evidence" value="ECO:0000314"/>
    <property type="project" value="UniProtKB"/>
</dbReference>
<dbReference type="GO" id="GO:0031982">
    <property type="term" value="C:vesicle"/>
    <property type="evidence" value="ECO:0000314"/>
    <property type="project" value="UniProtKB"/>
</dbReference>
<dbReference type="GO" id="GO:0033093">
    <property type="term" value="C:Weibel-Palade body"/>
    <property type="evidence" value="ECO:0000314"/>
    <property type="project" value="UniProtKB"/>
</dbReference>
<dbReference type="GO" id="GO:0005509">
    <property type="term" value="F:calcium ion binding"/>
    <property type="evidence" value="ECO:0000314"/>
    <property type="project" value="UniProtKB"/>
</dbReference>
<dbReference type="GO" id="GO:0005525">
    <property type="term" value="F:GTP binding"/>
    <property type="evidence" value="ECO:0000318"/>
    <property type="project" value="GO_Central"/>
</dbReference>
<dbReference type="GO" id="GO:0003924">
    <property type="term" value="F:GTPase activity"/>
    <property type="evidence" value="ECO:0000315"/>
    <property type="project" value="UniProtKB"/>
</dbReference>
<dbReference type="GO" id="GO:0032237">
    <property type="term" value="P:activation of store-operated calcium channel activity"/>
    <property type="evidence" value="ECO:0000315"/>
    <property type="project" value="UniProtKB"/>
</dbReference>
<dbReference type="GO" id="GO:0002250">
    <property type="term" value="P:adaptive immune response"/>
    <property type="evidence" value="ECO:0007669"/>
    <property type="project" value="UniProtKB-KW"/>
</dbReference>
<dbReference type="GO" id="GO:0016197">
    <property type="term" value="P:endosomal transport"/>
    <property type="evidence" value="ECO:0000314"/>
    <property type="project" value="UniProtKB"/>
</dbReference>
<dbReference type="GO" id="GO:0051928">
    <property type="term" value="P:positive regulation of calcium ion transport"/>
    <property type="evidence" value="ECO:0000315"/>
    <property type="project" value="UniProtKB"/>
</dbReference>
<dbReference type="GO" id="GO:0046330">
    <property type="term" value="P:positive regulation of JNK cascade"/>
    <property type="evidence" value="ECO:0000315"/>
    <property type="project" value="UniProtKB"/>
</dbReference>
<dbReference type="GO" id="GO:0008104">
    <property type="term" value="P:protein localization"/>
    <property type="evidence" value="ECO:0000315"/>
    <property type="project" value="MGI"/>
</dbReference>
<dbReference type="GO" id="GO:0034776">
    <property type="term" value="P:response to histamine"/>
    <property type="evidence" value="ECO:0000314"/>
    <property type="project" value="UniProtKB"/>
</dbReference>
<dbReference type="GO" id="GO:0002115">
    <property type="term" value="P:store-operated calcium entry"/>
    <property type="evidence" value="ECO:0000315"/>
    <property type="project" value="UniProtKB"/>
</dbReference>
<dbReference type="GO" id="GO:0045063">
    <property type="term" value="P:T-helper 1 cell differentiation"/>
    <property type="evidence" value="ECO:0000315"/>
    <property type="project" value="UniProtKB"/>
</dbReference>
<dbReference type="GO" id="GO:0016192">
    <property type="term" value="P:vesicle-mediated transport"/>
    <property type="evidence" value="ECO:0000318"/>
    <property type="project" value="GO_Central"/>
</dbReference>
<dbReference type="CDD" id="cd00154">
    <property type="entry name" value="Rab"/>
    <property type="match status" value="1"/>
</dbReference>
<dbReference type="FunFam" id="1.10.238.10:FF:000643">
    <property type="entry name" value="EF-hand calcium-binding domain-containing protein 4B"/>
    <property type="match status" value="1"/>
</dbReference>
<dbReference type="FunFam" id="3.40.50.300:FF:001129">
    <property type="entry name" value="ras-related protein Rab-44 isoform X2"/>
    <property type="match status" value="1"/>
</dbReference>
<dbReference type="Gene3D" id="1.10.238.10">
    <property type="entry name" value="EF-hand"/>
    <property type="match status" value="1"/>
</dbReference>
<dbReference type="Gene3D" id="3.40.50.300">
    <property type="entry name" value="P-loop containing nucleotide triphosphate hydrolases"/>
    <property type="match status" value="1"/>
</dbReference>
<dbReference type="InterPro" id="IPR011992">
    <property type="entry name" value="EF-hand-dom_pair"/>
</dbReference>
<dbReference type="InterPro" id="IPR018247">
    <property type="entry name" value="EF_Hand_1_Ca_BS"/>
</dbReference>
<dbReference type="InterPro" id="IPR002048">
    <property type="entry name" value="EF_hand_dom"/>
</dbReference>
<dbReference type="InterPro" id="IPR027417">
    <property type="entry name" value="P-loop_NTPase"/>
</dbReference>
<dbReference type="InterPro" id="IPR050227">
    <property type="entry name" value="Rab"/>
</dbReference>
<dbReference type="InterPro" id="IPR005225">
    <property type="entry name" value="Small_GTP-bd"/>
</dbReference>
<dbReference type="InterPro" id="IPR001806">
    <property type="entry name" value="Small_GTPase"/>
</dbReference>
<dbReference type="NCBIfam" id="TIGR00231">
    <property type="entry name" value="small_GTP"/>
    <property type="match status" value="1"/>
</dbReference>
<dbReference type="PANTHER" id="PTHR47977">
    <property type="entry name" value="RAS-RELATED PROTEIN RAB"/>
    <property type="match status" value="1"/>
</dbReference>
<dbReference type="Pfam" id="PF13499">
    <property type="entry name" value="EF-hand_7"/>
    <property type="match status" value="1"/>
</dbReference>
<dbReference type="Pfam" id="PF00071">
    <property type="entry name" value="Ras"/>
    <property type="match status" value="1"/>
</dbReference>
<dbReference type="PRINTS" id="PR00449">
    <property type="entry name" value="RASTRNSFRMNG"/>
</dbReference>
<dbReference type="SMART" id="SM00177">
    <property type="entry name" value="ARF"/>
    <property type="match status" value="1"/>
</dbReference>
<dbReference type="SMART" id="SM00054">
    <property type="entry name" value="EFh"/>
    <property type="match status" value="2"/>
</dbReference>
<dbReference type="SMART" id="SM00175">
    <property type="entry name" value="RAB"/>
    <property type="match status" value="1"/>
</dbReference>
<dbReference type="SMART" id="SM00176">
    <property type="entry name" value="RAN"/>
    <property type="match status" value="1"/>
</dbReference>
<dbReference type="SMART" id="SM00173">
    <property type="entry name" value="RAS"/>
    <property type="match status" value="1"/>
</dbReference>
<dbReference type="SMART" id="SM00174">
    <property type="entry name" value="RHO"/>
    <property type="match status" value="1"/>
</dbReference>
<dbReference type="SUPFAM" id="SSF47473">
    <property type="entry name" value="EF-hand"/>
    <property type="match status" value="1"/>
</dbReference>
<dbReference type="SUPFAM" id="SSF52540">
    <property type="entry name" value="P-loop containing nucleoside triphosphate hydrolases"/>
    <property type="match status" value="1"/>
</dbReference>
<dbReference type="PROSITE" id="PS00018">
    <property type="entry name" value="EF_HAND_1"/>
    <property type="match status" value="1"/>
</dbReference>
<dbReference type="PROSITE" id="PS50222">
    <property type="entry name" value="EF_HAND_2"/>
    <property type="match status" value="1"/>
</dbReference>
<dbReference type="PROSITE" id="PS51419">
    <property type="entry name" value="RAB"/>
    <property type="match status" value="1"/>
</dbReference>
<protein>
    <recommendedName>
        <fullName>EF-hand calcium-binding domain-containing protein 4B</fullName>
    </recommendedName>
    <alternativeName>
        <fullName>Calcium release-activated calcium channel regulator 2A</fullName>
        <shortName>CRAC channel regulator 2A</shortName>
    </alternativeName>
    <alternativeName>
        <fullName>Calcium release-activated channel regulator 2A</fullName>
    </alternativeName>
    <alternativeName>
        <fullName evidence="15">Ras-related protein Rab-46</fullName>
        <ecNumber evidence="9">3.6.5.2</ecNumber>
    </alternativeName>
</protein>
<accession>Q9BSW2</accession>
<accession>B4E1X0</accession>
<accession>B9EK63</accession>
<proteinExistence type="evidence at protein level"/>
<sequence>MAAPDGRVVSRPQRLGQGSGQGPKGSGACLHPLDSLEQKETQEQTSGQLVMLRKAQEFFQTCDAEGKGFIARKDMQRLHKELPLSLEELEDVFDALDADGNGYLTPQEFTTGFSHFFFSQNNPSQEDAGEQVAQRHEEKVYLSRGDEDLGDMGEDEEAQFRMLMDRLGAQKVLEDESDVKQLWLQLKKEEPHLLSNFEDFLTRIISQLQEAHEEKNELECALKRKIAAYDEEIQHLYEEMEQQIKSEKEQFLLKDTERFQARSQELEQKLLCKEQELEQLTQKQKRLEGQCTALHHDKHETKAENTKLKLTNQELARELERTSWELQDAQQQLESLQQEACKLHQEKEMEVYRVTESLQREKAGLLKQLDFLRERNKHLRDERDICFQKNKAAKANTAASRASWKKRSGSVIGKYVDSRGILRSQSEEEEEVFGIPRRSSLGLSGYPLTEEEPGTGEPGPGGPYPRPLRRIISVEEDPLPQLLDGGFEQPLSKCSEEEEVSDQGVQGQIPEAPPLKLTPTSPRGQPVGKEALCKEESSPSAPDRLFKIVFVGNSAVGKTSFLRRFCEDRFSPGMAATVGIDYRVKTLNVDNSQVALQLWDTAGQERYRCITQQFFRKADGVIVMYDLTDKQSFLSVRRWLSSVEEAVGDRVPVLLLGNKLDNEKEREVPRGLGEQLATENNLIFYECSAYSGHNTKESLLHLARFLKEQEDTVREDTIQVGHPAKKKSCCG</sequence>
<evidence type="ECO:0000250" key="1">
    <source>
        <dbReference type="UniProtKB" id="P63012"/>
    </source>
</evidence>
<evidence type="ECO:0000255" key="2"/>
<evidence type="ECO:0000255" key="3">
    <source>
        <dbReference type="PROSITE-ProRule" id="PRU00448"/>
    </source>
</evidence>
<evidence type="ECO:0000255" key="4">
    <source>
        <dbReference type="PROSITE-ProRule" id="PRU00753"/>
    </source>
</evidence>
<evidence type="ECO:0000256" key="5">
    <source>
        <dbReference type="SAM" id="MobiDB-lite"/>
    </source>
</evidence>
<evidence type="ECO:0000269" key="6">
    <source>
    </source>
</evidence>
<evidence type="ECO:0000269" key="7">
    <source>
    </source>
</evidence>
<evidence type="ECO:0000269" key="8">
    <source>
    </source>
</evidence>
<evidence type="ECO:0000269" key="9">
    <source>
    </source>
</evidence>
<evidence type="ECO:0000269" key="10">
    <source>
    </source>
</evidence>
<evidence type="ECO:0000269" key="11">
    <source>
    </source>
</evidence>
<evidence type="ECO:0000269" key="12">
    <source>
    </source>
</evidence>
<evidence type="ECO:0000303" key="13">
    <source>
    </source>
</evidence>
<evidence type="ECO:0000303" key="14">
    <source>
    </source>
</evidence>
<evidence type="ECO:0000303" key="15">
    <source>
    </source>
</evidence>
<evidence type="ECO:0000305" key="16"/>
<evidence type="ECO:0000305" key="17">
    <source>
    </source>
</evidence>
<evidence type="ECO:0000312" key="18">
    <source>
        <dbReference type="HGNC" id="HGNC:28657"/>
    </source>
</evidence>
<evidence type="ECO:0007829" key="19">
    <source>
        <dbReference type="PDB" id="6PSD"/>
    </source>
</evidence>
<organism>
    <name type="scientific">Homo sapiens</name>
    <name type="common">Human</name>
    <dbReference type="NCBI Taxonomy" id="9606"/>
    <lineage>
        <taxon>Eukaryota</taxon>
        <taxon>Metazoa</taxon>
        <taxon>Chordata</taxon>
        <taxon>Craniata</taxon>
        <taxon>Vertebrata</taxon>
        <taxon>Euteleostomi</taxon>
        <taxon>Mammalia</taxon>
        <taxon>Eutheria</taxon>
        <taxon>Euarchontoglires</taxon>
        <taxon>Primates</taxon>
        <taxon>Haplorrhini</taxon>
        <taxon>Catarrhini</taxon>
        <taxon>Hominidae</taxon>
        <taxon>Homo</taxon>
    </lineage>
</organism>
<keyword id="KW-0002">3D-structure</keyword>
<keyword id="KW-1064">Adaptive immunity</keyword>
<keyword id="KW-0025">Alternative splicing</keyword>
<keyword id="KW-0106">Calcium</keyword>
<keyword id="KW-0109">Calcium transport</keyword>
<keyword id="KW-1003">Cell membrane</keyword>
<keyword id="KW-0175">Coiled coil</keyword>
<keyword id="KW-0963">Cytoplasm</keyword>
<keyword id="KW-0206">Cytoskeleton</keyword>
<keyword id="KW-0333">Golgi apparatus</keyword>
<keyword id="KW-0342">GTP-binding</keyword>
<keyword id="KW-0378">Hydrolase</keyword>
<keyword id="KW-0391">Immunity</keyword>
<keyword id="KW-0406">Ion transport</keyword>
<keyword id="KW-0449">Lipoprotein</keyword>
<keyword id="KW-0460">Magnesium</keyword>
<keyword id="KW-0472">Membrane</keyword>
<keyword id="KW-0479">Metal-binding</keyword>
<keyword id="KW-0547">Nucleotide-binding</keyword>
<keyword id="KW-0636">Prenylation</keyword>
<keyword id="KW-1267">Proteomics identification</keyword>
<keyword id="KW-1185">Reference proteome</keyword>
<keyword id="KW-0677">Repeat</keyword>
<keyword id="KW-0813">Transport</keyword>